<gene>
    <name type="ordered locus">Bcep18194_A3962</name>
</gene>
<feature type="chain" id="PRO_0000258810" description="UPF0301 protein Bcep18194_A3962">
    <location>
        <begin position="1"/>
        <end position="192"/>
    </location>
</feature>
<organism>
    <name type="scientific">Burkholderia lata (strain ATCC 17760 / DSM 23089 / LMG 22485 / NCIMB 9086 / R18194 / 383)</name>
    <dbReference type="NCBI Taxonomy" id="482957"/>
    <lineage>
        <taxon>Bacteria</taxon>
        <taxon>Pseudomonadati</taxon>
        <taxon>Pseudomonadota</taxon>
        <taxon>Betaproteobacteria</taxon>
        <taxon>Burkholderiales</taxon>
        <taxon>Burkholderiaceae</taxon>
        <taxon>Burkholderia</taxon>
        <taxon>Burkholderia cepacia complex</taxon>
    </lineage>
</organism>
<sequence length="192" mass="20656">MSKPSDRINLTNQFLIAMPNMADPTFSGTVVYLCDHSERGALGLVINRPTDIDLESLFNRIDLKLDIEPLLHIPVYFGGPVQTERGFVLHEPVEGASYNSSMSVEGGLEMTTSKDVLEAVATGTGPKRFLLTLGHAGWGAGQLEEEISRNGWLTVAADPRIVFDTPAEERFEAALGLLGVSSSMLSGEAGHA</sequence>
<comment type="similarity">
    <text evidence="1">Belongs to the UPF0301 (AlgH) family.</text>
</comment>
<name>Y3962_BURL3</name>
<evidence type="ECO:0000255" key="1">
    <source>
        <dbReference type="HAMAP-Rule" id="MF_00758"/>
    </source>
</evidence>
<proteinExistence type="inferred from homology"/>
<accession>Q39J05</accession>
<protein>
    <recommendedName>
        <fullName evidence="1">UPF0301 protein Bcep18194_A3962</fullName>
    </recommendedName>
</protein>
<dbReference type="EMBL" id="CP000151">
    <property type="protein sequence ID" value="ABB07561.1"/>
    <property type="molecule type" value="Genomic_DNA"/>
</dbReference>
<dbReference type="RefSeq" id="WP_011351143.1">
    <property type="nucleotide sequence ID" value="NZ_WNDV01000014.1"/>
</dbReference>
<dbReference type="SMR" id="Q39J05"/>
<dbReference type="KEGG" id="bur:Bcep18194_A3962"/>
<dbReference type="HOGENOM" id="CLU_057596_1_0_4"/>
<dbReference type="Proteomes" id="UP000002705">
    <property type="component" value="Chromosome 1"/>
</dbReference>
<dbReference type="GO" id="GO:0005829">
    <property type="term" value="C:cytosol"/>
    <property type="evidence" value="ECO:0007669"/>
    <property type="project" value="TreeGrafter"/>
</dbReference>
<dbReference type="Gene3D" id="3.40.1740.10">
    <property type="entry name" value="VC0467-like"/>
    <property type="match status" value="1"/>
</dbReference>
<dbReference type="HAMAP" id="MF_00758">
    <property type="entry name" value="UPF0301"/>
    <property type="match status" value="1"/>
</dbReference>
<dbReference type="InterPro" id="IPR003774">
    <property type="entry name" value="AlgH-like"/>
</dbReference>
<dbReference type="NCBIfam" id="NF001266">
    <property type="entry name" value="PRK00228.1-1"/>
    <property type="match status" value="1"/>
</dbReference>
<dbReference type="NCBIfam" id="NF001267">
    <property type="entry name" value="PRK00228.1-2"/>
    <property type="match status" value="1"/>
</dbReference>
<dbReference type="PANTHER" id="PTHR30327">
    <property type="entry name" value="UNCHARACTERIZED PROTEIN YQGE"/>
    <property type="match status" value="1"/>
</dbReference>
<dbReference type="PANTHER" id="PTHR30327:SF1">
    <property type="entry name" value="UPF0301 PROTEIN YQGE"/>
    <property type="match status" value="1"/>
</dbReference>
<dbReference type="Pfam" id="PF02622">
    <property type="entry name" value="DUF179"/>
    <property type="match status" value="1"/>
</dbReference>
<dbReference type="SUPFAM" id="SSF143456">
    <property type="entry name" value="VC0467-like"/>
    <property type="match status" value="1"/>
</dbReference>
<reference key="1">
    <citation type="submission" date="2005-10" db="EMBL/GenBank/DDBJ databases">
        <title>Complete sequence of chromosome 1 of Burkholderia sp. 383.</title>
        <authorList>
            <consortium name="US DOE Joint Genome Institute"/>
            <person name="Copeland A."/>
            <person name="Lucas S."/>
            <person name="Lapidus A."/>
            <person name="Barry K."/>
            <person name="Detter J.C."/>
            <person name="Glavina T."/>
            <person name="Hammon N."/>
            <person name="Israni S."/>
            <person name="Pitluck S."/>
            <person name="Chain P."/>
            <person name="Malfatti S."/>
            <person name="Shin M."/>
            <person name="Vergez L."/>
            <person name="Schmutz J."/>
            <person name="Larimer F."/>
            <person name="Land M."/>
            <person name="Kyrpides N."/>
            <person name="Lykidis A."/>
            <person name="Richardson P."/>
        </authorList>
    </citation>
    <scope>NUCLEOTIDE SEQUENCE [LARGE SCALE GENOMIC DNA]</scope>
    <source>
        <strain>ATCC 17760 / DSM 23089 / LMG 22485 / NCIMB 9086 / R18194 / 383</strain>
    </source>
</reference>